<gene>
    <name evidence="1" type="primary">smg</name>
    <name type="ordered locus">ASA_4137</name>
</gene>
<protein>
    <recommendedName>
        <fullName evidence="1">Protein Smg homolog</fullName>
    </recommendedName>
</protein>
<dbReference type="EMBL" id="CP000644">
    <property type="protein sequence ID" value="ABO92076.1"/>
    <property type="molecule type" value="Genomic_DNA"/>
</dbReference>
<dbReference type="RefSeq" id="WP_005319913.1">
    <property type="nucleotide sequence ID" value="NC_009348.1"/>
</dbReference>
<dbReference type="SMR" id="A4ST54"/>
<dbReference type="STRING" id="29491.GCA_000820065_03415"/>
<dbReference type="KEGG" id="asa:ASA_4137"/>
<dbReference type="eggNOG" id="COG2922">
    <property type="taxonomic scope" value="Bacteria"/>
</dbReference>
<dbReference type="HOGENOM" id="CLU_133242_0_0_6"/>
<dbReference type="Proteomes" id="UP000000225">
    <property type="component" value="Chromosome"/>
</dbReference>
<dbReference type="HAMAP" id="MF_00598">
    <property type="entry name" value="Smg"/>
    <property type="match status" value="1"/>
</dbReference>
<dbReference type="InterPro" id="IPR007456">
    <property type="entry name" value="Smg"/>
</dbReference>
<dbReference type="NCBIfam" id="NF002897">
    <property type="entry name" value="PRK03430.1"/>
    <property type="match status" value="1"/>
</dbReference>
<dbReference type="PANTHER" id="PTHR38692">
    <property type="entry name" value="PROTEIN SMG"/>
    <property type="match status" value="1"/>
</dbReference>
<dbReference type="PANTHER" id="PTHR38692:SF1">
    <property type="entry name" value="PROTEIN SMG"/>
    <property type="match status" value="1"/>
</dbReference>
<dbReference type="Pfam" id="PF04361">
    <property type="entry name" value="DUF494"/>
    <property type="match status" value="1"/>
</dbReference>
<name>SMG_AERS4</name>
<organism>
    <name type="scientific">Aeromonas salmonicida (strain A449)</name>
    <dbReference type="NCBI Taxonomy" id="382245"/>
    <lineage>
        <taxon>Bacteria</taxon>
        <taxon>Pseudomonadati</taxon>
        <taxon>Pseudomonadota</taxon>
        <taxon>Gammaproteobacteria</taxon>
        <taxon>Aeromonadales</taxon>
        <taxon>Aeromonadaceae</taxon>
        <taxon>Aeromonas</taxon>
    </lineage>
</organism>
<accession>A4ST54</accession>
<comment type="similarity">
    <text evidence="1">Belongs to the Smg family.</text>
</comment>
<sequence>MFDVLMYLFETYIHSDADVMVEQNELTDELSRAGFDKDEIEKALNWLERLANLHDSEREVYVAASAQGSMRIYAPQELARLGTECRGFLLFLEQAQVLNAETREICIERLLELDKPDIELDDLKWVVMMVLFNVPGSENAYQQMEELVFDESDGVIH</sequence>
<reference key="1">
    <citation type="journal article" date="2008" name="BMC Genomics">
        <title>The genome of Aeromonas salmonicida subsp. salmonicida A449: insights into the evolution of a fish pathogen.</title>
        <authorList>
            <person name="Reith M.E."/>
            <person name="Singh R.K."/>
            <person name="Curtis B."/>
            <person name="Boyd J.M."/>
            <person name="Bouevitch A."/>
            <person name="Kimball J."/>
            <person name="Munholland J."/>
            <person name="Murphy C."/>
            <person name="Sarty D."/>
            <person name="Williams J."/>
            <person name="Nash J.H."/>
            <person name="Johnson S.C."/>
            <person name="Brown L.L."/>
        </authorList>
    </citation>
    <scope>NUCLEOTIDE SEQUENCE [LARGE SCALE GENOMIC DNA]</scope>
    <source>
        <strain>A449</strain>
    </source>
</reference>
<evidence type="ECO:0000255" key="1">
    <source>
        <dbReference type="HAMAP-Rule" id="MF_00598"/>
    </source>
</evidence>
<proteinExistence type="inferred from homology"/>
<feature type="chain" id="PRO_1000025643" description="Protein Smg homolog">
    <location>
        <begin position="1"/>
        <end position="157"/>
    </location>
</feature>